<feature type="chain" id="PRO_0000143384" description="Maturase K">
    <location>
        <begin position="1"/>
        <end position="507"/>
    </location>
</feature>
<gene>
    <name evidence="1" type="primary">matK</name>
</gene>
<geneLocation type="chloroplast"/>
<name>MATK_FAGTA</name>
<keyword id="KW-0150">Chloroplast</keyword>
<keyword id="KW-0507">mRNA processing</keyword>
<keyword id="KW-0934">Plastid</keyword>
<keyword id="KW-0694">RNA-binding</keyword>
<keyword id="KW-0819">tRNA processing</keyword>
<dbReference type="EMBL" id="AB093085">
    <property type="protein sequence ID" value="BAC21005.1"/>
    <property type="molecule type" value="Genomic_DNA"/>
</dbReference>
<dbReference type="EMBL" id="AB093086">
    <property type="protein sequence ID" value="BAC21006.1"/>
    <property type="molecule type" value="Genomic_DNA"/>
</dbReference>
<dbReference type="EMBL" id="AB093084">
    <property type="protein sequence ID" value="BAC21004.1"/>
    <property type="molecule type" value="Genomic_DNA"/>
</dbReference>
<dbReference type="EMBL" id="AB093083">
    <property type="protein sequence ID" value="BAC21003.1"/>
    <property type="molecule type" value="Genomic_DNA"/>
</dbReference>
<dbReference type="RefSeq" id="YP_009142031.1">
    <property type="nucleotide sequence ID" value="NC_027161.1"/>
</dbReference>
<dbReference type="GeneID" id="24418443"/>
<dbReference type="GO" id="GO:0009507">
    <property type="term" value="C:chloroplast"/>
    <property type="evidence" value="ECO:0007669"/>
    <property type="project" value="UniProtKB-SubCell"/>
</dbReference>
<dbReference type="GO" id="GO:0003723">
    <property type="term" value="F:RNA binding"/>
    <property type="evidence" value="ECO:0007669"/>
    <property type="project" value="UniProtKB-KW"/>
</dbReference>
<dbReference type="GO" id="GO:0006397">
    <property type="term" value="P:mRNA processing"/>
    <property type="evidence" value="ECO:0007669"/>
    <property type="project" value="UniProtKB-KW"/>
</dbReference>
<dbReference type="GO" id="GO:0008380">
    <property type="term" value="P:RNA splicing"/>
    <property type="evidence" value="ECO:0007669"/>
    <property type="project" value="UniProtKB-UniRule"/>
</dbReference>
<dbReference type="GO" id="GO:0008033">
    <property type="term" value="P:tRNA processing"/>
    <property type="evidence" value="ECO:0007669"/>
    <property type="project" value="UniProtKB-KW"/>
</dbReference>
<dbReference type="HAMAP" id="MF_01390">
    <property type="entry name" value="MatK"/>
    <property type="match status" value="1"/>
</dbReference>
<dbReference type="InterPro" id="IPR024937">
    <property type="entry name" value="Domain_X"/>
</dbReference>
<dbReference type="InterPro" id="IPR002866">
    <property type="entry name" value="Maturase_MatK"/>
</dbReference>
<dbReference type="InterPro" id="IPR024942">
    <property type="entry name" value="Maturase_MatK_N"/>
</dbReference>
<dbReference type="PANTHER" id="PTHR34811">
    <property type="entry name" value="MATURASE K"/>
    <property type="match status" value="1"/>
</dbReference>
<dbReference type="PANTHER" id="PTHR34811:SF1">
    <property type="entry name" value="MATURASE K"/>
    <property type="match status" value="1"/>
</dbReference>
<dbReference type="Pfam" id="PF01348">
    <property type="entry name" value="Intron_maturas2"/>
    <property type="match status" value="1"/>
</dbReference>
<dbReference type="Pfam" id="PF01824">
    <property type="entry name" value="MatK_N"/>
    <property type="match status" value="1"/>
</dbReference>
<reference key="1">
    <citation type="journal article" date="2003" name="Am. J. Bot.">
        <title>Intraspecific cpDNA variations of diploid and tetraploid perennial buckwheat, Fagopyrum cymosum (Polygonaceae).</title>
        <authorList>
            <person name="Yamane K."/>
            <person name="Yasui Y."/>
            <person name="Ohnishi O."/>
        </authorList>
        <dbReference type="AGRICOLA" id="IND43672290"/>
    </citation>
    <scope>NUCLEOTIDE SEQUENCE [GENOMIC DNA]</scope>
    <source>
        <strain>Isolate C9044</strain>
        <strain>Isolate C9532</strain>
        <strain>Isolate C9542</strain>
        <strain>Isolate CT9835</strain>
    </source>
</reference>
<proteinExistence type="inferred from homology"/>
<accession>Q859W3</accession>
<protein>
    <recommendedName>
        <fullName evidence="1">Maturase K</fullName>
    </recommendedName>
    <alternativeName>
        <fullName evidence="1">Intron maturase</fullName>
    </alternativeName>
</protein>
<sequence length="507" mass="60019">MEEFQGYLELYRSWQDNFLYPLILQESIYALVHNQDLGLNGSILLSKKKGYDTKYSLLVVKRLVIRMYQQNFVILSLNDSNKNEFFVPNKNLYSQRISEGFAVLAEIPFSMRVMSSLKGKERKQYQNLRSIHSIFPFLEDKFSRLNHVLDILIPHPVHTKILVQTIRYCVKDISCLHLLQLLLYEYCNNGITLKGSVSNLSKNKNQRFLLFLYNSYVCECESIFVFLRNQSSHLRSTSYGAFLARVYFYLKLEHFLKVFTKHFRVILQFFKDPFMHYVRYQGKWILASRGTFLLMTKLKYYFVNFWQCNFYLWLQTRRIYINKSLNQPIDFIGFLLSVRLNPSVVRSQMLENSFLIYNGIKKFETLVPTMSLIGSLAKAKFCNVLGHPISKPAWADLSDSDIIRRFGRMCRNLSHYYSGSSKKGGLYRIKYILRLSCARTLARKHKSTVRAFMKRLGSEFFEEFFFKEEKVISLILSRDSSISRRLYRGPIWYFDIFCIHDLASHND</sequence>
<organism>
    <name type="scientific">Fagopyrum tataricum</name>
    <name type="common">Tartarian buckwheat</name>
    <name type="synonym">Polygonum tataricum</name>
    <dbReference type="NCBI Taxonomy" id="62330"/>
    <lineage>
        <taxon>Eukaryota</taxon>
        <taxon>Viridiplantae</taxon>
        <taxon>Streptophyta</taxon>
        <taxon>Embryophyta</taxon>
        <taxon>Tracheophyta</taxon>
        <taxon>Spermatophyta</taxon>
        <taxon>Magnoliopsida</taxon>
        <taxon>eudicotyledons</taxon>
        <taxon>Gunneridae</taxon>
        <taxon>Pentapetalae</taxon>
        <taxon>Caryophyllales</taxon>
        <taxon>Polygonaceae</taxon>
        <taxon>Polygonoideae</taxon>
        <taxon>Fagopyreae</taxon>
        <taxon>Fagopyrum</taxon>
    </lineage>
</organism>
<evidence type="ECO:0000255" key="1">
    <source>
        <dbReference type="HAMAP-Rule" id="MF_01390"/>
    </source>
</evidence>
<comment type="function">
    <text evidence="1">Usually encoded in the trnK tRNA gene intron. Probably assists in splicing its own and other chloroplast group II introns.</text>
</comment>
<comment type="subcellular location">
    <subcellularLocation>
        <location>Plastid</location>
        <location>Chloroplast</location>
    </subcellularLocation>
</comment>
<comment type="similarity">
    <text evidence="1">Belongs to the intron maturase 2 family. MatK subfamily.</text>
</comment>